<sequence>MDVNMAAELSPTNSSSSGELSVSPEPPRETQAFLGKVTVIDYFTFQHKHLKVTNIDDMTETLYVKLPENMTRCDHLPITCEYLLGRGSYGAVYAHADNATVKLYDSVTELYHELMVCDMIQIGKATAEDGQDKALVDYLSACTSCHALFMPQFRCSLQDYGHWHDGSIEPLVRGFQGLKDAVYFLNRHCGLFHSDISPSNILVDFTDTMWGMGRLVLTDYGTASLHDRNKMLDVRLKSSKGRQLYRLYCQREPFSIAKDTYKPLCLLSKCYILRGAGHIPDPSACGPVGAQTALRLDLQSLGYSLLYGIMHLADSTHKIPYPNPDMGFDRSDPLYFLQFAAPKVVLLEVLSQMWNLNLDMGLTSCGESPCVDVTAEHMSQFLQWCRSLKKRFKESYFFNCRPRFEHPHLPGLVAELLADDFFGPDGRRG</sequence>
<reference key="1">
    <citation type="journal article" date="2006" name="Virology">
        <title>The genome of Epstein-Barr virus type 2 strain AG876.</title>
        <authorList>
            <person name="Dolan A."/>
            <person name="Addison C."/>
            <person name="Gatherer D."/>
            <person name="Davison A.J."/>
            <person name="McGeoch D.J."/>
        </authorList>
    </citation>
    <scope>NUCLEOTIDE SEQUENCE [LARGE SCALE GENOMIC DNA]</scope>
</reference>
<dbReference type="EC" id="2.7.11.1"/>
<dbReference type="EMBL" id="DQ279927">
    <property type="protein sequence ID" value="ABB89262.1"/>
    <property type="molecule type" value="Genomic_DNA"/>
</dbReference>
<dbReference type="RefSeq" id="YP_001129482.1">
    <property type="nucleotide sequence ID" value="NC_009334.1"/>
</dbReference>
<dbReference type="RefSeq" id="YP_401688.1">
    <property type="nucleotide sequence ID" value="NC_007605.1"/>
</dbReference>
<dbReference type="DNASU" id="3783704"/>
<dbReference type="GeneID" id="3783704"/>
<dbReference type="KEGG" id="vg:3783704"/>
<dbReference type="KEGG" id="vg:5176213"/>
<dbReference type="Proteomes" id="UP000007639">
    <property type="component" value="Genome"/>
</dbReference>
<dbReference type="GO" id="GO:0042025">
    <property type="term" value="C:host cell nucleus"/>
    <property type="evidence" value="ECO:0007669"/>
    <property type="project" value="UniProtKB-SubCell"/>
</dbReference>
<dbReference type="GO" id="GO:0019033">
    <property type="term" value="C:viral tegument"/>
    <property type="evidence" value="ECO:0007669"/>
    <property type="project" value="UniProtKB-SubCell"/>
</dbReference>
<dbReference type="GO" id="GO:0005524">
    <property type="term" value="F:ATP binding"/>
    <property type="evidence" value="ECO:0007669"/>
    <property type="project" value="UniProtKB-KW"/>
</dbReference>
<dbReference type="GO" id="GO:0106310">
    <property type="term" value="F:protein serine kinase activity"/>
    <property type="evidence" value="ECO:0007669"/>
    <property type="project" value="RHEA"/>
</dbReference>
<dbReference type="GO" id="GO:0004674">
    <property type="term" value="F:protein serine/threonine kinase activity"/>
    <property type="evidence" value="ECO:0007669"/>
    <property type="project" value="UniProtKB-KW"/>
</dbReference>
<dbReference type="GO" id="GO:0039525">
    <property type="term" value="P:symbiont-mediated perturbation of host chromatin organization"/>
    <property type="evidence" value="ECO:0007669"/>
    <property type="project" value="UniProtKB-KW"/>
</dbReference>
<dbReference type="GO" id="GO:0039548">
    <property type="term" value="P:symbiont-mediated suppression of host cytoplasmic pattern recognition receptor signaling pathway via inhibition of IRF3 activity"/>
    <property type="evidence" value="ECO:0007669"/>
    <property type="project" value="UniProtKB-KW"/>
</dbReference>
<dbReference type="FunFam" id="1.10.510.10:FF:001645">
    <property type="entry name" value="Serine/threonine-protein kinase BGLF4"/>
    <property type="match status" value="1"/>
</dbReference>
<dbReference type="Gene3D" id="1.10.510.10">
    <property type="entry name" value="Transferase(Phosphotransferase) domain 1"/>
    <property type="match status" value="1"/>
</dbReference>
<dbReference type="InterPro" id="IPR011009">
    <property type="entry name" value="Kinase-like_dom_sf"/>
</dbReference>
<dbReference type="InterPro" id="IPR000719">
    <property type="entry name" value="Prot_kinase_dom"/>
</dbReference>
<dbReference type="InterPro" id="IPR008266">
    <property type="entry name" value="Tyr_kinase_AS"/>
</dbReference>
<dbReference type="SMART" id="SM00220">
    <property type="entry name" value="S_TKc"/>
    <property type="match status" value="1"/>
</dbReference>
<dbReference type="SUPFAM" id="SSF56112">
    <property type="entry name" value="Protein kinase-like (PK-like)"/>
    <property type="match status" value="1"/>
</dbReference>
<dbReference type="PROSITE" id="PS50011">
    <property type="entry name" value="PROTEIN_KINASE_DOM"/>
    <property type="match status" value="1"/>
</dbReference>
<dbReference type="PROSITE" id="PS00109">
    <property type="entry name" value="PROTEIN_KINASE_TYR"/>
    <property type="match status" value="1"/>
</dbReference>
<evidence type="ECO:0000250" key="1">
    <source>
        <dbReference type="UniProtKB" id="P13288"/>
    </source>
</evidence>
<evidence type="ECO:0000255" key="2">
    <source>
        <dbReference type="PROSITE-ProRule" id="PRU00159"/>
    </source>
</evidence>
<evidence type="ECO:0000255" key="3">
    <source>
        <dbReference type="PROSITE-ProRule" id="PRU10028"/>
    </source>
</evidence>
<evidence type="ECO:0000256" key="4">
    <source>
        <dbReference type="SAM" id="MobiDB-lite"/>
    </source>
</evidence>
<organism>
    <name type="scientific">Epstein-Barr virus (strain AG876)</name>
    <name type="common">HHV-4</name>
    <name type="synonym">Human herpesvirus 4</name>
    <dbReference type="NCBI Taxonomy" id="82830"/>
    <lineage>
        <taxon>Viruses</taxon>
        <taxon>Duplodnaviria</taxon>
        <taxon>Heunggongvirae</taxon>
        <taxon>Peploviricota</taxon>
        <taxon>Herviviricetes</taxon>
        <taxon>Herpesvirales</taxon>
        <taxon>Orthoherpesviridae</taxon>
        <taxon>Gammaherpesvirinae</taxon>
        <taxon>Lymphocryptovirus</taxon>
        <taxon>Lymphocryptovirus humangamma4</taxon>
        <taxon>Epstein-Barr virus (strain GD1)</taxon>
    </lineage>
</organism>
<accession>P0C6Z8</accession>
<accession>Q777D1</accession>
<name>KR2_EBVA8</name>
<feature type="chain" id="PRO_0000375959" description="Serine/threonine-protein kinase BGLF4">
    <location>
        <begin position="1"/>
        <end position="429"/>
    </location>
</feature>
<feature type="domain" description="Protein kinase" evidence="2">
    <location>
        <begin position="1"/>
        <end position="409"/>
    </location>
</feature>
<feature type="region of interest" description="Disordered" evidence="4">
    <location>
        <begin position="1"/>
        <end position="27"/>
    </location>
</feature>
<feature type="region of interest" description="SUMO interaction motif" evidence="1">
    <location>
        <begin position="36"/>
        <end position="40"/>
    </location>
</feature>
<feature type="region of interest" description="SUMO interaction motif" evidence="1">
    <location>
        <begin position="344"/>
        <end position="350"/>
    </location>
</feature>
<feature type="compositionally biased region" description="Low complexity" evidence="4">
    <location>
        <begin position="14"/>
        <end position="23"/>
    </location>
</feature>
<feature type="active site" description="Proton acceptor" evidence="2 3">
    <location>
        <position position="195"/>
    </location>
</feature>
<feature type="binding site" evidence="2">
    <location>
        <begin position="110"/>
        <end position="118"/>
    </location>
    <ligand>
        <name>ATP</name>
        <dbReference type="ChEBI" id="CHEBI:30616"/>
    </ligand>
</feature>
<feature type="binding site" evidence="2">
    <location>
        <position position="128"/>
    </location>
    <ligand>
        <name>ATP</name>
        <dbReference type="ChEBI" id="CHEBI:30616"/>
    </ligand>
</feature>
<protein>
    <recommendedName>
        <fullName>Serine/threonine-protein kinase BGLF4</fullName>
        <ecNumber>2.7.11.1</ecNumber>
    </recommendedName>
</protein>
<organismHost>
    <name type="scientific">Homo sapiens</name>
    <name type="common">Human</name>
    <dbReference type="NCBI Taxonomy" id="9606"/>
</organismHost>
<proteinExistence type="inferred from homology"/>
<comment type="function">
    <text evidence="1">Plays many key roles by phosphorylating several proteins including the viral DNA processivity factor BMRF1, EBNA1 or EBNA2. Modifies the host nuclear envelope structure and induces the redistribution of nuclear envelope-associated proteins by phosphorylating host nucleoporins. Subsequently, promotes the nuclear transport of EBV lytic proteins. Required for efficient lytic DNA replication and release of nucleocapsids from the nucleus. Contributes to the compaction of host cell chromatin in cells undergoing lytic replication, presumably by phosphorylating the host condensin complex and host TOP2A. Induces disassembly of the nuclear lamina by phosphorylating with host LMNA. Phosphorylates substrates involved in capsid assembly and DNA packaging. Facilitates the switch from latent to lytic DNA replication by down-regulating EBNA1 replication function. Phosphorylates the viral immediate-early protein BZLF1 and inhibits its sumoylation by interacting with host SUMO1 and SUMO2. Phosphorylates also host SAMHD1 and thereby counteracts its antiviral effect by reducing its dNTP hydrolase activity.</text>
</comment>
<comment type="catalytic activity">
    <reaction>
        <text>L-seryl-[protein] + ATP = O-phospho-L-seryl-[protein] + ADP + H(+)</text>
        <dbReference type="Rhea" id="RHEA:17989"/>
        <dbReference type="Rhea" id="RHEA-COMP:9863"/>
        <dbReference type="Rhea" id="RHEA-COMP:11604"/>
        <dbReference type="ChEBI" id="CHEBI:15378"/>
        <dbReference type="ChEBI" id="CHEBI:29999"/>
        <dbReference type="ChEBI" id="CHEBI:30616"/>
        <dbReference type="ChEBI" id="CHEBI:83421"/>
        <dbReference type="ChEBI" id="CHEBI:456216"/>
        <dbReference type="EC" id="2.7.11.1"/>
    </reaction>
</comment>
<comment type="catalytic activity">
    <reaction>
        <text>L-threonyl-[protein] + ATP = O-phospho-L-threonyl-[protein] + ADP + H(+)</text>
        <dbReference type="Rhea" id="RHEA:46608"/>
        <dbReference type="Rhea" id="RHEA-COMP:11060"/>
        <dbReference type="Rhea" id="RHEA-COMP:11605"/>
        <dbReference type="ChEBI" id="CHEBI:15378"/>
        <dbReference type="ChEBI" id="CHEBI:30013"/>
        <dbReference type="ChEBI" id="CHEBI:30616"/>
        <dbReference type="ChEBI" id="CHEBI:61977"/>
        <dbReference type="ChEBI" id="CHEBI:456216"/>
        <dbReference type="EC" id="2.7.11.1"/>
    </reaction>
</comment>
<comment type="subunit">
    <text evidence="1">Interacts with host NUP62 and NUP153; this interaction plays a role in nuclear targeting of BGLF4. Interacts with host SUMO1 and SUMO2.</text>
</comment>
<comment type="subcellular location">
    <subcellularLocation>
        <location evidence="1">Virion tegument</location>
    </subcellularLocation>
    <subcellularLocation>
        <location evidence="1">Host nucleus</location>
    </subcellularLocation>
    <text evidence="1">the protein is present at discrete sites in nuclei, called replication compartments where viral DNA replication occurs.</text>
</comment>
<comment type="similarity">
    <text evidence="2">Belongs to the protein kinase superfamily. Ser/Thr protein kinase family.</text>
</comment>
<keyword id="KW-0067">ATP-binding</keyword>
<keyword id="KW-0244">Early protein</keyword>
<keyword id="KW-1048">Host nucleus</keyword>
<keyword id="KW-0945">Host-virus interaction</keyword>
<keyword id="KW-1090">Inhibition of host innate immune response by virus</keyword>
<keyword id="KW-1092">Inhibition of host IRF3 by virus</keyword>
<keyword id="KW-1113">Inhibition of host RLR pathway by virus</keyword>
<keyword id="KW-0418">Kinase</keyword>
<keyword id="KW-1122">Modulation of host chromatin by virus</keyword>
<keyword id="KW-0547">Nucleotide-binding</keyword>
<keyword id="KW-1185">Reference proteome</keyword>
<keyword id="KW-0723">Serine/threonine-protein kinase</keyword>
<keyword id="KW-0808">Transferase</keyword>
<keyword id="KW-0899">Viral immunoevasion</keyword>
<keyword id="KW-0946">Virion</keyword>
<keyword id="KW-0920">Virion tegument</keyword>
<gene>
    <name type="ORF">BGLF4</name>
</gene>